<evidence type="ECO:0000255" key="1">
    <source>
        <dbReference type="PROSITE-ProRule" id="PRU00159"/>
    </source>
</evidence>
<evidence type="ECO:0000255" key="2">
    <source>
        <dbReference type="PROSITE-ProRule" id="PRU10027"/>
    </source>
</evidence>
<evidence type="ECO:0000256" key="3">
    <source>
        <dbReference type="SAM" id="MobiDB-lite"/>
    </source>
</evidence>
<evidence type="ECO:0000269" key="4">
    <source>
    </source>
</evidence>
<evidence type="ECO:0000305" key="5"/>
<evidence type="ECO:0007744" key="6">
    <source>
    </source>
</evidence>
<evidence type="ECO:0007744" key="7">
    <source>
    </source>
</evidence>
<evidence type="ECO:0007744" key="8">
    <source>
    </source>
</evidence>
<reference key="1">
    <citation type="journal article" date="1995" name="Science">
        <title>Activation of yeast PBS2 MAPKK by MAPKKKs or by binding of an SH3-containing osmosensor.</title>
        <authorList>
            <person name="Maeda T."/>
            <person name="Takekawa M."/>
            <person name="Saito H."/>
        </authorList>
    </citation>
    <scope>NUCLEOTIDE SEQUENCE [GENOMIC DNA]</scope>
</reference>
<reference key="2">
    <citation type="journal article" date="1997" name="Nature">
        <title>The nucleotide sequence of Saccharomyces cerevisiae chromosome XIV and its evolutionary implications.</title>
        <authorList>
            <person name="Philippsen P."/>
            <person name="Kleine K."/>
            <person name="Poehlmann R."/>
            <person name="Duesterhoeft A."/>
            <person name="Hamberg K."/>
            <person name="Hegemann J.H."/>
            <person name="Obermaier B."/>
            <person name="Urrestarazu L.A."/>
            <person name="Aert R."/>
            <person name="Albermann K."/>
            <person name="Altmann R."/>
            <person name="Andre B."/>
            <person name="Baladron V."/>
            <person name="Ballesta J.P.G."/>
            <person name="Becam A.-M."/>
            <person name="Beinhauer J.D."/>
            <person name="Boskovic J."/>
            <person name="Buitrago M.J."/>
            <person name="Bussereau F."/>
            <person name="Coster F."/>
            <person name="Crouzet M."/>
            <person name="D'Angelo M."/>
            <person name="Dal Pero F."/>
            <person name="De Antoni A."/>
            <person name="del Rey F."/>
            <person name="Doignon F."/>
            <person name="Domdey H."/>
            <person name="Dubois E."/>
            <person name="Fiedler T.A."/>
            <person name="Fleig U."/>
            <person name="Floeth M."/>
            <person name="Fritz C."/>
            <person name="Gaillardin C."/>
            <person name="Garcia-Cantalejo J.M."/>
            <person name="Glansdorff N."/>
            <person name="Goffeau A."/>
            <person name="Gueldener U."/>
            <person name="Herbert C.J."/>
            <person name="Heumann K."/>
            <person name="Heuss-Neitzel D."/>
            <person name="Hilbert H."/>
            <person name="Hinni K."/>
            <person name="Iraqui Houssaini I."/>
            <person name="Jacquet M."/>
            <person name="Jimenez A."/>
            <person name="Jonniaux J.-L."/>
            <person name="Karpfinger-Hartl L."/>
            <person name="Lanfranchi G."/>
            <person name="Lepingle A."/>
            <person name="Levesque H."/>
            <person name="Lyck R."/>
            <person name="Maftahi M."/>
            <person name="Mallet L."/>
            <person name="Maurer C.T.C."/>
            <person name="Messenguy F."/>
            <person name="Mewes H.-W."/>
            <person name="Moestl D."/>
            <person name="Nasr F."/>
            <person name="Nicaud J.-M."/>
            <person name="Niedenthal R.K."/>
            <person name="Pandolfo D."/>
            <person name="Pierard A."/>
            <person name="Piravandi E."/>
            <person name="Planta R.J."/>
            <person name="Pohl T.M."/>
            <person name="Purnelle B."/>
            <person name="Rebischung C."/>
            <person name="Remacha M.A."/>
            <person name="Revuelta J.L."/>
            <person name="Rinke M."/>
            <person name="Saiz J.E."/>
            <person name="Sartorello F."/>
            <person name="Scherens B."/>
            <person name="Sen-Gupta M."/>
            <person name="Soler-Mira A."/>
            <person name="Urbanus J.H.M."/>
            <person name="Valle G."/>
            <person name="Van Dyck L."/>
            <person name="Verhasselt P."/>
            <person name="Vierendeels F."/>
            <person name="Vissers S."/>
            <person name="Voet M."/>
            <person name="Volckaert G."/>
            <person name="Wach A."/>
            <person name="Wambutt R."/>
            <person name="Wedler H."/>
            <person name="Zollner A."/>
            <person name="Hani J."/>
        </authorList>
    </citation>
    <scope>NUCLEOTIDE SEQUENCE [LARGE SCALE GENOMIC DNA]</scope>
    <source>
        <strain>ATCC 204508 / S288c</strain>
    </source>
</reference>
<reference key="3">
    <citation type="journal article" date="2014" name="G3 (Bethesda)">
        <title>The reference genome sequence of Saccharomyces cerevisiae: Then and now.</title>
        <authorList>
            <person name="Engel S.R."/>
            <person name="Dietrich F.S."/>
            <person name="Fisk D.G."/>
            <person name="Binkley G."/>
            <person name="Balakrishnan R."/>
            <person name="Costanzo M.C."/>
            <person name="Dwight S.S."/>
            <person name="Hitz B.C."/>
            <person name="Karra K."/>
            <person name="Nash R.S."/>
            <person name="Weng S."/>
            <person name="Wong E.D."/>
            <person name="Lloyd P."/>
            <person name="Skrzypek M.S."/>
            <person name="Miyasato S.R."/>
            <person name="Simison M."/>
            <person name="Cherry J.M."/>
        </authorList>
    </citation>
    <scope>GENOME REANNOTATION</scope>
    <source>
        <strain>ATCC 204508 / S288c</strain>
    </source>
</reference>
<reference key="4">
    <citation type="journal article" date="2003" name="Nature">
        <title>Global analysis of protein expression in yeast.</title>
        <authorList>
            <person name="Ghaemmaghami S."/>
            <person name="Huh W.-K."/>
            <person name="Bower K."/>
            <person name="Howson R.W."/>
            <person name="Belle A."/>
            <person name="Dephoure N."/>
            <person name="O'Shea E.K."/>
            <person name="Weissman J.S."/>
        </authorList>
    </citation>
    <scope>LEVEL OF PROTEIN EXPRESSION [LARGE SCALE ANALYSIS]</scope>
</reference>
<reference key="5">
    <citation type="journal article" date="2007" name="J. Proteome Res.">
        <title>Large-scale phosphorylation analysis of alpha-factor-arrested Saccharomyces cerevisiae.</title>
        <authorList>
            <person name="Li X."/>
            <person name="Gerber S.A."/>
            <person name="Rudner A.D."/>
            <person name="Beausoleil S.A."/>
            <person name="Haas W."/>
            <person name="Villen J."/>
            <person name="Elias J.E."/>
            <person name="Gygi S.P."/>
        </authorList>
    </citation>
    <scope>PHOSPHORYLATION [LARGE SCALE ANALYSIS] AT SER-118</scope>
    <scope>IDENTIFICATION BY MASS SPECTROMETRY [LARGE SCALE ANALYSIS]</scope>
    <source>
        <strain>ADR376</strain>
    </source>
</reference>
<reference key="6">
    <citation type="journal article" date="2008" name="Mol. Cell. Proteomics">
        <title>A multidimensional chromatography technology for in-depth phosphoproteome analysis.</title>
        <authorList>
            <person name="Albuquerque C.P."/>
            <person name="Smolka M.B."/>
            <person name="Payne S.H."/>
            <person name="Bafna V."/>
            <person name="Eng J."/>
            <person name="Zhou H."/>
        </authorList>
    </citation>
    <scope>PHOSPHORYLATION [LARGE SCALE ANALYSIS] AT SER-290</scope>
    <scope>IDENTIFICATION BY MASS SPECTROMETRY [LARGE SCALE ANALYSIS]</scope>
</reference>
<reference key="7">
    <citation type="journal article" date="2009" name="Science">
        <title>Global analysis of Cdk1 substrate phosphorylation sites provides insights into evolution.</title>
        <authorList>
            <person name="Holt L.J."/>
            <person name="Tuch B.B."/>
            <person name="Villen J."/>
            <person name="Johnson A.D."/>
            <person name="Gygi S.P."/>
            <person name="Morgan D.O."/>
        </authorList>
    </citation>
    <scope>PHOSPHORYLATION [LARGE SCALE ANALYSIS] AT SER-57; SER-62; SER-78; SER-118 AND SER-1424</scope>
    <scope>IDENTIFICATION BY MASS SPECTROMETRY [LARGE SCALE ANALYSIS]</scope>
</reference>
<sequence>MSHSDYFNYKPYGDSTEKPSSSKMRQSSSSSSSRLRSESLGRNSNTTQARVASSPISPGLHSTQYFRSPNAVYSPGESPLNTVQLFNRLPGIPQGQFFHQNAISGSSSSSARSSRRPSNIGLPLPKNPQQSLPKLSTQPVPVHKKVEASKTESEIIKKPAPVNSNQDPLLTTPTLVISPELASLNTTNTSIMSTPQNITNQTSNKHIPTRSQPNGSTSSSTLQDIVTTNSSQRSVGHHGGSTTSLRTYKKQYVLNEQLYLRKMRNRANDDYYTRGIVASSNFEDDEENFSNKGEDDLELEMDDLLKVEGEDKDNDFNFGYNFITSSTKNNENVVSMSLNYLKGKLDWLRDVNNDQPCEIEDEEWHSILGSEDLLSKLLQNPMVNNRFEWQTMLSKVLKGDIVRNEKTKIANQGKGPGFNTQFSDDIWIELKAWMNGRTVEDQNKSLRIFRDSTDSVFQEIMAFKLEDNMSADEAAETIKSLVDKYYRVLNLWPNIKRMHAEKPITKTEAFRNRIDTLNSWLNFKFNFDTNIAYLKKWIVGNKELESTTEVDNTTVNLDDPAVFATNCKRFAEQIMKEKDIELIFQKKIFFPLAPWILKAKFFFLKYQKTWNELNLSYLDQDLEFLLMFPMRLVKDIILIRLSYAKKIQNPTLMMIDQMMDDFSTYIKLAVQMKFTVASYCNDWFFKVKIDPEFDHTVVEGLEYFFSILELRILYSGKNSFKTSKEPDLLLKYWEMFRNVGYYIDDAGELIAAEFTKLTLRLVHRLHAYLLRQQNTPPKLENEAAAEKWLVQIFEILGSMKRKLNRFTNILTKAFQNFVRYKIEDHNYLLKQLKETGHFLIYTGGYLEQNGTYLIGSPELLGCKDDDILRIIKNSDIGCDLVPKLEINNSLTIYNALDDNWNSNSSLGSDISNDGTPFYYIKNDLTTQPRSYNGNRVNREPDFENSRSTEEEFYELETRLNSLGYVLVLTPQEPLLWEGEMYNLSDNKTIKPEGLNLKVIPNSIDLMCQGSSYALEYQCDRFQQISGSSVSFLEKKSSSETVKNNLQRINKAYFRCTYSVLKNYTKIVTTFKKVSPVNDLLNNIFLFGRDFGLNFLRINVANNEKRSIIILLMMRLSIGWLKFLAEDCDPTDQRVFRWCVTSMEFAMHMVSGWNILALDECQFSSLKQKISECMSLLISHFDIIGARSIEVEKINQQARSNLDLEDVFDDDMMLQVNSEFRVQSIMELEERIKRNPHQTGKVIDDSDKGNKYLVSLASSISNVSMRWQKRNFIGGGTFGRVYSAVDLDNGEILAVKEINIQDSKSMQKIFPLIKEEMSVLEILNHPNIVSYYGVEVHRDKVNIFMEYCEGGSLAALLEHGRIEDEMVTQVYTLQLLEGLAYLHESGIVHRDVKPENILLDFNGVIKYVDFGAAKKIANNGTRLASMNKIENADGEHEDVTHVSDSKAVKNNENALLDMMGTPMYMAPESITGSTTKGKLGADDVWSLGCVVLEMITGRRPWANLDNEWAIMYHVAAGHTPQFPTKDEVSSAGMKFLERCLIQNPSKRASAVELLMDPWIVQIREIAFGDDSSSTDTEERE</sequence>
<protein>
    <recommendedName>
        <fullName>MAP kinase kinase kinase SSK2</fullName>
        <ecNumber>2.7.11.25</ecNumber>
    </recommendedName>
    <alternativeName>
        <fullName>Suppressor of sensor kinase 2</fullName>
    </alternativeName>
</protein>
<gene>
    <name type="primary">SSK2</name>
    <name type="ordered locus">YNR031C</name>
    <name type="ORF">N3276</name>
</gene>
<comment type="function">
    <text>Kinase involved in a signal transduction pathway that is activated by changes in the osmolarity of the extracellular environment. Activates the PBS2 MAP kinase kinase by phosphorylation.</text>
</comment>
<comment type="catalytic activity">
    <reaction>
        <text>L-seryl-[protein] + ATP = O-phospho-L-seryl-[protein] + ADP + H(+)</text>
        <dbReference type="Rhea" id="RHEA:17989"/>
        <dbReference type="Rhea" id="RHEA-COMP:9863"/>
        <dbReference type="Rhea" id="RHEA-COMP:11604"/>
        <dbReference type="ChEBI" id="CHEBI:15378"/>
        <dbReference type="ChEBI" id="CHEBI:29999"/>
        <dbReference type="ChEBI" id="CHEBI:30616"/>
        <dbReference type="ChEBI" id="CHEBI:83421"/>
        <dbReference type="ChEBI" id="CHEBI:456216"/>
        <dbReference type="EC" id="2.7.11.25"/>
    </reaction>
</comment>
<comment type="catalytic activity">
    <reaction>
        <text>L-threonyl-[protein] + ATP = O-phospho-L-threonyl-[protein] + ADP + H(+)</text>
        <dbReference type="Rhea" id="RHEA:46608"/>
        <dbReference type="Rhea" id="RHEA-COMP:11060"/>
        <dbReference type="Rhea" id="RHEA-COMP:11605"/>
        <dbReference type="ChEBI" id="CHEBI:15378"/>
        <dbReference type="ChEBI" id="CHEBI:30013"/>
        <dbReference type="ChEBI" id="CHEBI:30616"/>
        <dbReference type="ChEBI" id="CHEBI:61977"/>
        <dbReference type="ChEBI" id="CHEBI:456216"/>
        <dbReference type="EC" id="2.7.11.25"/>
    </reaction>
</comment>
<comment type="subunit">
    <text>Interacts with by SSK1.</text>
</comment>
<comment type="interaction">
    <interactant intactId="EBI-18191">
        <id>P53599</id>
    </interactant>
    <interactant intactId="EBI-17372">
        <id>Q00772</id>
        <label>SLT2</label>
    </interactant>
    <organismsDiffer>false</organismsDiffer>
    <experiments>2</experiments>
</comment>
<comment type="interaction">
    <interactant intactId="EBI-18191">
        <id>P53599</id>
    </interactant>
    <interactant intactId="EBI-18184">
        <id>Q07084</id>
        <label>SSK1</label>
    </interactant>
    <organismsDiffer>false</organismsDiffer>
    <experiments>8</experiments>
</comment>
<comment type="miscellaneous">
    <text evidence="4">Present with 217 molecules/cell in log phase SD medium.</text>
</comment>
<comment type="similarity">
    <text evidence="5">Belongs to the protein kinase superfamily. STE Ser/Thr protein kinase family. MAP kinase kinase kinase subfamily.</text>
</comment>
<dbReference type="EC" id="2.7.11.25"/>
<dbReference type="EMBL" id="L41927">
    <property type="protein sequence ID" value="AAC41665.1"/>
    <property type="molecule type" value="Genomic_DNA"/>
</dbReference>
<dbReference type="EMBL" id="Z71646">
    <property type="protein sequence ID" value="CAA96311.1"/>
    <property type="molecule type" value="Genomic_DNA"/>
</dbReference>
<dbReference type="EMBL" id="BK006947">
    <property type="protein sequence ID" value="DAA10571.1"/>
    <property type="molecule type" value="Genomic_DNA"/>
</dbReference>
<dbReference type="PIR" id="S59801">
    <property type="entry name" value="S59801"/>
</dbReference>
<dbReference type="RefSeq" id="NP_014428.1">
    <property type="nucleotide sequence ID" value="NM_001183208.1"/>
</dbReference>
<dbReference type="SMR" id="P53599"/>
<dbReference type="BioGRID" id="35855">
    <property type="interactions" value="256"/>
</dbReference>
<dbReference type="DIP" id="DIP-2436N"/>
<dbReference type="FunCoup" id="P53599">
    <property type="interactions" value="564"/>
</dbReference>
<dbReference type="IntAct" id="P53599">
    <property type="interactions" value="38"/>
</dbReference>
<dbReference type="MINT" id="P53599"/>
<dbReference type="STRING" id="4932.YNR031C"/>
<dbReference type="iPTMnet" id="P53599"/>
<dbReference type="PaxDb" id="4932-YNR031C"/>
<dbReference type="PeptideAtlas" id="P53599"/>
<dbReference type="TopDownProteomics" id="P53599"/>
<dbReference type="EnsemblFungi" id="YNR031C_mRNA">
    <property type="protein sequence ID" value="YNR031C"/>
    <property type="gene ID" value="YNR031C"/>
</dbReference>
<dbReference type="GeneID" id="855765"/>
<dbReference type="KEGG" id="sce:YNR031C"/>
<dbReference type="AGR" id="SGD:S000005314"/>
<dbReference type="SGD" id="S000005314">
    <property type="gene designation" value="SSK2"/>
</dbReference>
<dbReference type="VEuPathDB" id="FungiDB:YNR031C"/>
<dbReference type="eggNOG" id="KOG4645">
    <property type="taxonomic scope" value="Eukaryota"/>
</dbReference>
<dbReference type="GeneTree" id="ENSGT00940000176701"/>
<dbReference type="HOGENOM" id="CLU_001999_2_0_1"/>
<dbReference type="InParanoid" id="P53599"/>
<dbReference type="OMA" id="PPCVDEN"/>
<dbReference type="OrthoDB" id="1043025at2759"/>
<dbReference type="BioCyc" id="YEAST:G3O-33342-MONOMER"/>
<dbReference type="BRENDA" id="2.7.11.25">
    <property type="organism ID" value="984"/>
</dbReference>
<dbReference type="BioGRID-ORCS" id="855765">
    <property type="hits" value="0 hits in 13 CRISPR screens"/>
</dbReference>
<dbReference type="PRO" id="PR:P53599"/>
<dbReference type="Proteomes" id="UP000002311">
    <property type="component" value="Chromosome XIV"/>
</dbReference>
<dbReference type="RNAct" id="P53599">
    <property type="molecule type" value="protein"/>
</dbReference>
<dbReference type="GO" id="GO:0005938">
    <property type="term" value="C:cell cortex"/>
    <property type="evidence" value="ECO:0000314"/>
    <property type="project" value="SGD"/>
</dbReference>
<dbReference type="GO" id="GO:0005935">
    <property type="term" value="C:cellular bud neck"/>
    <property type="evidence" value="ECO:0000314"/>
    <property type="project" value="SGD"/>
</dbReference>
<dbReference type="GO" id="GO:0005934">
    <property type="term" value="C:cellular bud tip"/>
    <property type="evidence" value="ECO:0000314"/>
    <property type="project" value="SGD"/>
</dbReference>
<dbReference type="GO" id="GO:0005829">
    <property type="term" value="C:cytosol"/>
    <property type="evidence" value="ECO:0000314"/>
    <property type="project" value="SGD"/>
</dbReference>
<dbReference type="GO" id="GO:0000131">
    <property type="term" value="C:incipient cellular bud site"/>
    <property type="evidence" value="ECO:0000314"/>
    <property type="project" value="SGD"/>
</dbReference>
<dbReference type="GO" id="GO:0003779">
    <property type="term" value="F:actin binding"/>
    <property type="evidence" value="ECO:0000314"/>
    <property type="project" value="SGD"/>
</dbReference>
<dbReference type="GO" id="GO:0005524">
    <property type="term" value="F:ATP binding"/>
    <property type="evidence" value="ECO:0007669"/>
    <property type="project" value="UniProtKB-KW"/>
</dbReference>
<dbReference type="GO" id="GO:0004709">
    <property type="term" value="F:MAP kinase kinase kinase activity"/>
    <property type="evidence" value="ECO:0000314"/>
    <property type="project" value="SGD"/>
</dbReference>
<dbReference type="GO" id="GO:0106310">
    <property type="term" value="F:protein serine kinase activity"/>
    <property type="evidence" value="ECO:0007669"/>
    <property type="project" value="RHEA"/>
</dbReference>
<dbReference type="GO" id="GO:0071474">
    <property type="term" value="P:cellular hyperosmotic response"/>
    <property type="evidence" value="ECO:0000314"/>
    <property type="project" value="SGD"/>
</dbReference>
<dbReference type="GO" id="GO:0007234">
    <property type="term" value="P:osmosensory signaling via phosphorelay pathway"/>
    <property type="evidence" value="ECO:0000316"/>
    <property type="project" value="SGD"/>
</dbReference>
<dbReference type="GO" id="GO:0038066">
    <property type="term" value="P:p38MAPK cascade"/>
    <property type="evidence" value="ECO:0000315"/>
    <property type="project" value="SGD"/>
</dbReference>
<dbReference type="GO" id="GO:0032956">
    <property type="term" value="P:regulation of actin cytoskeleton organization"/>
    <property type="evidence" value="ECO:0000315"/>
    <property type="project" value="SGD"/>
</dbReference>
<dbReference type="GO" id="GO:0051403">
    <property type="term" value="P:stress-activated MAPK cascade"/>
    <property type="evidence" value="ECO:0007669"/>
    <property type="project" value="InterPro"/>
</dbReference>
<dbReference type="CDD" id="cd06626">
    <property type="entry name" value="STKc_MEKK4"/>
    <property type="match status" value="1"/>
</dbReference>
<dbReference type="FunFam" id="1.10.510.10:FF:000482">
    <property type="entry name" value="MAP kinase kinase kinase"/>
    <property type="match status" value="1"/>
</dbReference>
<dbReference type="Gene3D" id="1.10.510.10">
    <property type="entry name" value="Transferase(Phosphotransferase) domain 1"/>
    <property type="match status" value="1"/>
</dbReference>
<dbReference type="InterPro" id="IPR011009">
    <property type="entry name" value="Kinase-like_dom_sf"/>
</dbReference>
<dbReference type="InterPro" id="IPR050538">
    <property type="entry name" value="MAP_kinase_kinase_kinase"/>
</dbReference>
<dbReference type="InterPro" id="IPR017240">
    <property type="entry name" value="MAPKKK_Ssk2/Ssk22"/>
</dbReference>
<dbReference type="InterPro" id="IPR000719">
    <property type="entry name" value="Prot_kinase_dom"/>
</dbReference>
<dbReference type="InterPro" id="IPR017441">
    <property type="entry name" value="Protein_kinase_ATP_BS"/>
</dbReference>
<dbReference type="InterPro" id="IPR008271">
    <property type="entry name" value="Ser/Thr_kinase_AS"/>
</dbReference>
<dbReference type="PANTHER" id="PTHR48016">
    <property type="entry name" value="MAP KINASE KINASE KINASE SSK2-RELATED-RELATED"/>
    <property type="match status" value="1"/>
</dbReference>
<dbReference type="PANTHER" id="PTHR48016:SF32">
    <property type="entry name" value="MITOGEN-ACTIVATED PROTEIN KINASE KINASE KINASE 4"/>
    <property type="match status" value="1"/>
</dbReference>
<dbReference type="Pfam" id="PF00069">
    <property type="entry name" value="Pkinase"/>
    <property type="match status" value="1"/>
</dbReference>
<dbReference type="PIRSF" id="PIRSF037579">
    <property type="entry name" value="MAPKKK_SSK22"/>
    <property type="match status" value="1"/>
</dbReference>
<dbReference type="SMART" id="SM00220">
    <property type="entry name" value="S_TKc"/>
    <property type="match status" value="1"/>
</dbReference>
<dbReference type="SUPFAM" id="SSF56112">
    <property type="entry name" value="Protein kinase-like (PK-like)"/>
    <property type="match status" value="1"/>
</dbReference>
<dbReference type="PROSITE" id="PS00107">
    <property type="entry name" value="PROTEIN_KINASE_ATP"/>
    <property type="match status" value="1"/>
</dbReference>
<dbReference type="PROSITE" id="PS50011">
    <property type="entry name" value="PROTEIN_KINASE_DOM"/>
    <property type="match status" value="1"/>
</dbReference>
<dbReference type="PROSITE" id="PS00108">
    <property type="entry name" value="PROTEIN_KINASE_ST"/>
    <property type="match status" value="1"/>
</dbReference>
<feature type="chain" id="PRO_0000086682" description="MAP kinase kinase kinase SSK2">
    <location>
        <begin position="1"/>
        <end position="1579"/>
    </location>
</feature>
<feature type="domain" description="Protein kinase" evidence="1">
    <location>
        <begin position="1266"/>
        <end position="1558"/>
    </location>
</feature>
<feature type="region of interest" description="Disordered" evidence="3">
    <location>
        <begin position="1"/>
        <end position="70"/>
    </location>
</feature>
<feature type="region of interest" description="Disordered" evidence="3">
    <location>
        <begin position="97"/>
        <end position="155"/>
    </location>
</feature>
<feature type="region of interest" description="Disordered" evidence="3">
    <location>
        <begin position="190"/>
        <end position="243"/>
    </location>
</feature>
<feature type="compositionally biased region" description="Low complexity" evidence="3">
    <location>
        <begin position="21"/>
        <end position="44"/>
    </location>
</feature>
<feature type="compositionally biased region" description="Polar residues" evidence="3">
    <location>
        <begin position="45"/>
        <end position="67"/>
    </location>
</feature>
<feature type="compositionally biased region" description="Low complexity" evidence="3">
    <location>
        <begin position="104"/>
        <end position="118"/>
    </location>
</feature>
<feature type="compositionally biased region" description="Polar residues" evidence="3">
    <location>
        <begin position="127"/>
        <end position="139"/>
    </location>
</feature>
<feature type="compositionally biased region" description="Basic and acidic residues" evidence="3">
    <location>
        <begin position="144"/>
        <end position="155"/>
    </location>
</feature>
<feature type="active site" description="Proton acceptor" evidence="1 2">
    <location>
        <position position="1390"/>
    </location>
</feature>
<feature type="binding site" evidence="1">
    <location>
        <begin position="1272"/>
        <end position="1280"/>
    </location>
    <ligand>
        <name>ATP</name>
        <dbReference type="ChEBI" id="CHEBI:30616"/>
    </ligand>
</feature>
<feature type="binding site" evidence="1">
    <location>
        <position position="1295"/>
    </location>
    <ligand>
        <name>ATP</name>
        <dbReference type="ChEBI" id="CHEBI:30616"/>
    </ligand>
</feature>
<feature type="modified residue" description="Phosphoserine" evidence="8">
    <location>
        <position position="57"/>
    </location>
</feature>
<feature type="modified residue" description="Phosphoserine" evidence="8">
    <location>
        <position position="62"/>
    </location>
</feature>
<feature type="modified residue" description="Phosphoserine" evidence="8">
    <location>
        <position position="78"/>
    </location>
</feature>
<feature type="modified residue" description="Phosphoserine" evidence="6 8">
    <location>
        <position position="118"/>
    </location>
</feature>
<feature type="modified residue" description="Phosphoserine" evidence="7">
    <location>
        <position position="290"/>
    </location>
</feature>
<feature type="modified residue" description="Phosphoserine" evidence="8">
    <location>
        <position position="1424"/>
    </location>
</feature>
<keyword id="KW-0067">ATP-binding</keyword>
<keyword id="KW-0418">Kinase</keyword>
<keyword id="KW-0547">Nucleotide-binding</keyword>
<keyword id="KW-0597">Phosphoprotein</keyword>
<keyword id="KW-1185">Reference proteome</keyword>
<keyword id="KW-0723">Serine/threonine-protein kinase</keyword>
<keyword id="KW-0808">Transferase</keyword>
<proteinExistence type="evidence at protein level"/>
<accession>P53599</accession>
<accession>D6W1K5</accession>
<name>SSK2_YEAST</name>
<organism>
    <name type="scientific">Saccharomyces cerevisiae (strain ATCC 204508 / S288c)</name>
    <name type="common">Baker's yeast</name>
    <dbReference type="NCBI Taxonomy" id="559292"/>
    <lineage>
        <taxon>Eukaryota</taxon>
        <taxon>Fungi</taxon>
        <taxon>Dikarya</taxon>
        <taxon>Ascomycota</taxon>
        <taxon>Saccharomycotina</taxon>
        <taxon>Saccharomycetes</taxon>
        <taxon>Saccharomycetales</taxon>
        <taxon>Saccharomycetaceae</taxon>
        <taxon>Saccharomyces</taxon>
    </lineage>
</organism>